<sequence>MPAIEVGRICVKVKGREAGSKCVIVDIIDDNFVLVTGPKDISGVKRRRVNILHLEPTDKKIDIQKGASDEEVRKKIEEAGLTEYMKERIKIKIPTL</sequence>
<name>RL14E_SACI2</name>
<feature type="chain" id="PRO_1000212707" description="Large ribosomal subunit protein eL14">
    <location>
        <begin position="1"/>
        <end position="96"/>
    </location>
</feature>
<comment type="similarity">
    <text evidence="1">Belongs to the eukaryotic ribosomal protein eL14 family.</text>
</comment>
<keyword id="KW-0687">Ribonucleoprotein</keyword>
<keyword id="KW-0689">Ribosomal protein</keyword>
<protein>
    <recommendedName>
        <fullName evidence="1">Large ribosomal subunit protein eL14</fullName>
    </recommendedName>
    <alternativeName>
        <fullName evidence="2">50S ribosomal protein L14e</fullName>
    </alternativeName>
</protein>
<proteinExistence type="inferred from homology"/>
<dbReference type="EMBL" id="CP001399">
    <property type="protein sequence ID" value="ACP35834.1"/>
    <property type="molecule type" value="Genomic_DNA"/>
</dbReference>
<dbReference type="RefSeq" id="WP_012713922.1">
    <property type="nucleotide sequence ID" value="NC_012589.1"/>
</dbReference>
<dbReference type="SMR" id="C3MR21"/>
<dbReference type="KEGG" id="sis:LS215_1838"/>
<dbReference type="HOGENOM" id="CLU_183474_0_0_2"/>
<dbReference type="OrthoDB" id="63594at2157"/>
<dbReference type="Proteomes" id="UP000001747">
    <property type="component" value="Chromosome"/>
</dbReference>
<dbReference type="GO" id="GO:0022625">
    <property type="term" value="C:cytosolic large ribosomal subunit"/>
    <property type="evidence" value="ECO:0007669"/>
    <property type="project" value="TreeGrafter"/>
</dbReference>
<dbReference type="GO" id="GO:0003723">
    <property type="term" value="F:RNA binding"/>
    <property type="evidence" value="ECO:0007669"/>
    <property type="project" value="InterPro"/>
</dbReference>
<dbReference type="GO" id="GO:0003735">
    <property type="term" value="F:structural constituent of ribosome"/>
    <property type="evidence" value="ECO:0007669"/>
    <property type="project" value="InterPro"/>
</dbReference>
<dbReference type="GO" id="GO:0042273">
    <property type="term" value="P:ribosomal large subunit biogenesis"/>
    <property type="evidence" value="ECO:0007669"/>
    <property type="project" value="TreeGrafter"/>
</dbReference>
<dbReference type="GO" id="GO:0006412">
    <property type="term" value="P:translation"/>
    <property type="evidence" value="ECO:0007669"/>
    <property type="project" value="UniProtKB-UniRule"/>
</dbReference>
<dbReference type="CDD" id="cd23702">
    <property type="entry name" value="eL14"/>
    <property type="match status" value="1"/>
</dbReference>
<dbReference type="FunFam" id="2.30.30.30:FF:000045">
    <property type="entry name" value="50S ribosomal protein L14e"/>
    <property type="match status" value="1"/>
</dbReference>
<dbReference type="Gene3D" id="2.30.30.30">
    <property type="match status" value="1"/>
</dbReference>
<dbReference type="HAMAP" id="MF_00721">
    <property type="entry name" value="Ribosomal_eL14"/>
    <property type="match status" value="1"/>
</dbReference>
<dbReference type="InterPro" id="IPR014722">
    <property type="entry name" value="Rib_uL2_dom2"/>
</dbReference>
<dbReference type="InterPro" id="IPR039660">
    <property type="entry name" value="Ribosomal_eL14"/>
</dbReference>
<dbReference type="InterPro" id="IPR023651">
    <property type="entry name" value="Ribosomal_eL14_arc"/>
</dbReference>
<dbReference type="InterPro" id="IPR008991">
    <property type="entry name" value="Translation_prot_SH3-like_sf"/>
</dbReference>
<dbReference type="NCBIfam" id="NF003320">
    <property type="entry name" value="PRK04333.1"/>
    <property type="match status" value="1"/>
</dbReference>
<dbReference type="PANTHER" id="PTHR11127">
    <property type="entry name" value="60S RIBOSOMAL PROTEIN L14"/>
    <property type="match status" value="1"/>
</dbReference>
<dbReference type="PANTHER" id="PTHR11127:SF2">
    <property type="entry name" value="LARGE RIBOSOMAL SUBUNIT PROTEIN EL14"/>
    <property type="match status" value="1"/>
</dbReference>
<dbReference type="SUPFAM" id="SSF50104">
    <property type="entry name" value="Translation proteins SH3-like domain"/>
    <property type="match status" value="1"/>
</dbReference>
<gene>
    <name evidence="1" type="primary">rpl14e</name>
    <name type="ordered locus">LS215_1838</name>
</gene>
<evidence type="ECO:0000255" key="1">
    <source>
        <dbReference type="HAMAP-Rule" id="MF_00721"/>
    </source>
</evidence>
<evidence type="ECO:0000305" key="2"/>
<accession>C3MR21</accession>
<organism>
    <name type="scientific">Saccharolobus islandicus (strain L.S.2.15 / Lassen #1)</name>
    <name type="common">Sulfolobus islandicus</name>
    <dbReference type="NCBI Taxonomy" id="429572"/>
    <lineage>
        <taxon>Archaea</taxon>
        <taxon>Thermoproteota</taxon>
        <taxon>Thermoprotei</taxon>
        <taxon>Sulfolobales</taxon>
        <taxon>Sulfolobaceae</taxon>
        <taxon>Saccharolobus</taxon>
    </lineage>
</organism>
<reference key="1">
    <citation type="journal article" date="2009" name="Proc. Natl. Acad. Sci. U.S.A.">
        <title>Biogeography of the Sulfolobus islandicus pan-genome.</title>
        <authorList>
            <person name="Reno M.L."/>
            <person name="Held N.L."/>
            <person name="Fields C.J."/>
            <person name="Burke P.V."/>
            <person name="Whitaker R.J."/>
        </authorList>
    </citation>
    <scope>NUCLEOTIDE SEQUENCE [LARGE SCALE GENOMIC DNA]</scope>
    <source>
        <strain>L.S.2.15 / Lassen #1</strain>
    </source>
</reference>